<feature type="chain" id="PRO_0000115255" description="Uncharacterized protein IRL7">
    <location>
        <begin position="1"/>
        <end position="82"/>
    </location>
</feature>
<feature type="region of interest" description="Disordered" evidence="1">
    <location>
        <begin position="1"/>
        <end position="25"/>
    </location>
</feature>
<feature type="compositionally biased region" description="Basic and acidic residues" evidence="1">
    <location>
        <begin position="1"/>
        <end position="11"/>
    </location>
</feature>
<feature type="compositionally biased region" description="Polar residues" evidence="1">
    <location>
        <begin position="16"/>
        <end position="25"/>
    </location>
</feature>
<organism>
    <name type="scientific">Human cytomegalovirus (strain AD169)</name>
    <name type="common">HHV-5</name>
    <name type="synonym">Human herpesvirus 5</name>
    <dbReference type="NCBI Taxonomy" id="10360"/>
    <lineage>
        <taxon>Viruses</taxon>
        <taxon>Duplodnaviria</taxon>
        <taxon>Heunggongvirae</taxon>
        <taxon>Peploviricota</taxon>
        <taxon>Herviviricetes</taxon>
        <taxon>Herpesvirales</taxon>
        <taxon>Orthoherpesviridae</taxon>
        <taxon>Betaherpesvirinae</taxon>
        <taxon>Cytomegalovirus</taxon>
        <taxon>Cytomegalovirus humanbeta5</taxon>
        <taxon>Human cytomegalovirus</taxon>
    </lineage>
</organism>
<name>IR07_HCMVA</name>
<proteinExistence type="predicted"/>
<dbReference type="EMBL" id="X17403">
    <property type="protein sequence ID" value="CAA35455.1"/>
    <property type="molecule type" value="Genomic_DNA"/>
</dbReference>
<dbReference type="EMBL" id="X17403">
    <property type="protein sequence ID" value="CAA35303.1"/>
    <property type="molecule type" value="Genomic_DNA"/>
</dbReference>
<dbReference type="PIR" id="S09756">
    <property type="entry name" value="WMBECX"/>
</dbReference>
<dbReference type="SMR" id="P16805"/>
<dbReference type="Proteomes" id="UP000008991">
    <property type="component" value="Segment"/>
</dbReference>
<accession>P16805</accession>
<organismHost>
    <name type="scientific">Homo sapiens</name>
    <name type="common">Human</name>
    <dbReference type="NCBI Taxonomy" id="9606"/>
</organismHost>
<protein>
    <recommendedName>
        <fullName>Uncharacterized protein IRL7</fullName>
        <shortName>TRL7</shortName>
    </recommendedName>
</protein>
<sequence>MKARGSRENASKRRPSQTQYDTHLRTNQRITITRTAESHELVNQRHKIFTQSFLRTFRNQQVNKRLTKKNHLGIKKSSIVTL</sequence>
<evidence type="ECO:0000256" key="1">
    <source>
        <dbReference type="SAM" id="MobiDB-lite"/>
    </source>
</evidence>
<reference key="1">
    <citation type="journal article" date="1990" name="Curr. Top. Microbiol. Immunol.">
        <title>Analysis of the protein-coding content of the sequence of human cytomegalovirus strain AD169.</title>
        <authorList>
            <person name="Chee M.S."/>
            <person name="Bankier A.T."/>
            <person name="Beck S."/>
            <person name="Bohni R."/>
            <person name="Brown C.M."/>
            <person name="Cerny R."/>
            <person name="Horsnell T."/>
            <person name="Hutchison C.A. III"/>
            <person name="Kouzarides T."/>
            <person name="Martignetti J.A."/>
            <person name="Preddie E."/>
            <person name="Satchwell S.C."/>
            <person name="Tomlinson P."/>
            <person name="Weston K.M."/>
            <person name="Barrell B.G."/>
        </authorList>
    </citation>
    <scope>NUCLEOTIDE SEQUENCE [LARGE SCALE GENOMIC DNA]</scope>
</reference>